<organism>
    <name type="scientific">Rhizobium radiobacter</name>
    <name type="common">Agrobacterium tumefaciens</name>
    <name type="synonym">Agrobacterium radiobacter</name>
    <dbReference type="NCBI Taxonomy" id="358"/>
    <lineage>
        <taxon>Bacteria</taxon>
        <taxon>Pseudomonadati</taxon>
        <taxon>Pseudomonadota</taxon>
        <taxon>Alphaproteobacteria</taxon>
        <taxon>Hyphomicrobiales</taxon>
        <taxon>Rhizobiaceae</taxon>
        <taxon>Rhizobium/Agrobacterium group</taxon>
        <taxon>Agrobacterium</taxon>
        <taxon>Agrobacterium tumefaciens complex</taxon>
    </lineage>
</organism>
<protein>
    <recommendedName>
        <fullName>Protein virC1</fullName>
    </recommendedName>
</protein>
<dbReference type="EMBL" id="AF242881">
    <property type="protein sequence ID" value="AAA27407.1"/>
    <property type="molecule type" value="Genomic_DNA"/>
</dbReference>
<dbReference type="PIR" id="A25036">
    <property type="entry name" value="A25036"/>
</dbReference>
<dbReference type="RefSeq" id="NP_059812.1">
    <property type="nucleotide sequence ID" value="NC_002377.1"/>
</dbReference>
<dbReference type="RefSeq" id="WP_010892500.1">
    <property type="nucleotide sequence ID" value="NZ_QSNU01000012.1"/>
</dbReference>
<dbReference type="SMR" id="P06665"/>
<dbReference type="OrthoDB" id="113462at2"/>
<dbReference type="CDD" id="cd02042">
    <property type="entry name" value="ParAB_family"/>
    <property type="match status" value="1"/>
</dbReference>
<dbReference type="Gene3D" id="3.40.50.300">
    <property type="entry name" value="P-loop containing nucleotide triphosphate hydrolases"/>
    <property type="match status" value="1"/>
</dbReference>
<dbReference type="InterPro" id="IPR050678">
    <property type="entry name" value="DNA_Partitioning_ATPase"/>
</dbReference>
<dbReference type="InterPro" id="IPR027417">
    <property type="entry name" value="P-loop_NTPase"/>
</dbReference>
<dbReference type="InterPro" id="IPR009744">
    <property type="entry name" value="VirC1"/>
</dbReference>
<dbReference type="NCBIfam" id="NF010423">
    <property type="entry name" value="PRK13849.1"/>
    <property type="match status" value="1"/>
</dbReference>
<dbReference type="PANTHER" id="PTHR13696:SF96">
    <property type="entry name" value="COBQ_COBB_MIND_PARA NUCLEOTIDE BINDING DOMAIN-CONTAINING PROTEIN"/>
    <property type="match status" value="1"/>
</dbReference>
<dbReference type="PANTHER" id="PTHR13696">
    <property type="entry name" value="P-LOOP CONTAINING NUCLEOSIDE TRIPHOSPHATE HYDROLASE"/>
    <property type="match status" value="1"/>
</dbReference>
<dbReference type="Pfam" id="PF07015">
    <property type="entry name" value="VirC1"/>
    <property type="match status" value="1"/>
</dbReference>
<dbReference type="PIRSF" id="PIRSF009320">
    <property type="entry name" value="Nuc_binding_HP_1000"/>
    <property type="match status" value="1"/>
</dbReference>
<dbReference type="SUPFAM" id="SSF52540">
    <property type="entry name" value="P-loop containing nucleoside triphosphate hydrolases"/>
    <property type="match status" value="1"/>
</dbReference>
<keyword id="KW-0192">Crown gall tumor</keyword>
<keyword id="KW-0614">Plasmid</keyword>
<accession>P06665</accession>
<name>VIRC1_RHIRD</name>
<proteinExistence type="predicted"/>
<gene>
    <name type="primary">virC1</name>
</gene>
<geneLocation type="plasmid">
    <name>pTiA6NC</name>
</geneLocation>
<feature type="chain" id="PRO_0000065851" description="Protein virC1">
    <location>
        <begin position="1"/>
        <end position="231"/>
    </location>
</feature>
<reference key="1">
    <citation type="journal article" date="1986" name="J. Bacteriol.">
        <title>Molecular characterization of a host-range-determining locus from Agrobacterium tumefaciens.</title>
        <authorList>
            <person name="Yanofsky M.F."/>
            <person name="Nester E.W."/>
        </authorList>
    </citation>
    <scope>NUCLEOTIDE SEQUENCE [GENOMIC DNA]</scope>
</reference>
<sequence>MQLLTFCSFKGGAGKTTALMGLCAALANDGKRVALFDADENRPLTRWRENALQSSTWDPRCEVYSADEMPLLEAAYENAELEGFDYALADTRGGSSELNNTIIASSNLLLIPTMLTPLDIDEALSTYRYVIELMLSENLAIPTAVLRQRVPVGRLTTSQRRMSEMLESLPVVPSPMHERDAFSAMKERGMLHLTLLNMGTDPTMRLIERNLRIAMEEVVVISKLISKILEA</sequence>
<comment type="miscellaneous">
    <text>The Ti plasmid contains at least six transcriptional units, designated vir loci, which are essential for efficient crown-gall tumorigenesis.</text>
</comment>
<comment type="miscellaneous">
    <text>The translation of virC1 and virC2 may be coupled.</text>
</comment>